<feature type="chain" id="PRO_0000227410" description="UvrABC system protein C">
    <location>
        <begin position="1"/>
        <end position="607"/>
    </location>
</feature>
<feature type="domain" description="GIY-YIG" evidence="1">
    <location>
        <begin position="12"/>
        <end position="91"/>
    </location>
</feature>
<feature type="domain" description="UVR" evidence="1">
    <location>
        <begin position="200"/>
        <end position="235"/>
    </location>
</feature>
<protein>
    <recommendedName>
        <fullName evidence="1">UvrABC system protein C</fullName>
        <shortName evidence="1">Protein UvrC</shortName>
    </recommendedName>
    <alternativeName>
        <fullName evidence="1">Excinuclease ABC subunit C</fullName>
    </alternativeName>
</protein>
<keyword id="KW-0963">Cytoplasm</keyword>
<keyword id="KW-0227">DNA damage</keyword>
<keyword id="KW-0228">DNA excision</keyword>
<keyword id="KW-0234">DNA repair</keyword>
<keyword id="KW-0267">Excision nuclease</keyword>
<keyword id="KW-1185">Reference proteome</keyword>
<keyword id="KW-0742">SOS response</keyword>
<sequence>MTLWEKVKNLPDSPGVYLYKDEKGEVIYVGKAKNLKNRVRSYFQPPEKLLPKTRVMMEKARDIEVIITSTEVEALILEQNLIKRYRPRYNILLKDDKSYPYLKITGEEFPRLLITRRVVNDGGRYFGPYPDAGALNETYKLLRSIFKFRTCTPTIFAQKKRPCLNFHIKKCSAPCAGEISREEYFKEIEMVVDFLEGRGENLIKKLKKEMAIASDNLEFERAAKLRDQILALEKILAKQKISRGQRNADVVVVANRENLGVGLIFVIRQGNLLGQKVYTFTGEMETGELLNQVLVTHYGEAKEVPVEIILSTRENLDEEFLNSWFELKFGKKPKFTVPKRGEKFELLKMALENVNFTLDEKIKLNEKKQLLNEKALMDLKEALNLPVVPRRIEGYDISHLAGTGTVASMVVFIDGEPVKGKYRRFAIRSAANDDYTAMFEAVLRRFKKYLALQEEGGADGSFEELPDLVLIDGGKGQLNAAMDALKETNLLGKFTVIALAKEQEEIFLPGKKDSLLLTQDREGLKLLQRVRDEAHRFARGYQEKKRVKTLASLLEQVEGIGPKRRKQLLNKFGSIKNLREATVEEITAVPGITREIAERLKELLEME</sequence>
<evidence type="ECO:0000255" key="1">
    <source>
        <dbReference type="HAMAP-Rule" id="MF_00203"/>
    </source>
</evidence>
<reference key="1">
    <citation type="journal article" date="2005" name="PLoS Genet.">
        <title>Life in hot carbon monoxide: the complete genome sequence of Carboxydothermus hydrogenoformans Z-2901.</title>
        <authorList>
            <person name="Wu M."/>
            <person name="Ren Q."/>
            <person name="Durkin A.S."/>
            <person name="Daugherty S.C."/>
            <person name="Brinkac L.M."/>
            <person name="Dodson R.J."/>
            <person name="Madupu R."/>
            <person name="Sullivan S.A."/>
            <person name="Kolonay J.F."/>
            <person name="Nelson W.C."/>
            <person name="Tallon L.J."/>
            <person name="Jones K.M."/>
            <person name="Ulrich L.E."/>
            <person name="Gonzalez J.M."/>
            <person name="Zhulin I.B."/>
            <person name="Robb F.T."/>
            <person name="Eisen J.A."/>
        </authorList>
    </citation>
    <scope>NUCLEOTIDE SEQUENCE [LARGE SCALE GENOMIC DNA]</scope>
    <source>
        <strain>ATCC BAA-161 / DSM 6008 / Z-2901</strain>
    </source>
</reference>
<proteinExistence type="inferred from homology"/>
<name>UVRC_CARHZ</name>
<gene>
    <name evidence="1" type="primary">uvrC</name>
    <name type="ordered locus">CHY_0267</name>
</gene>
<dbReference type="EMBL" id="CP000141">
    <property type="protein sequence ID" value="ABB15745.1"/>
    <property type="molecule type" value="Genomic_DNA"/>
</dbReference>
<dbReference type="RefSeq" id="WP_011343215.1">
    <property type="nucleotide sequence ID" value="NC_007503.1"/>
</dbReference>
<dbReference type="SMR" id="Q3AFE5"/>
<dbReference type="FunCoup" id="Q3AFE5">
    <property type="interactions" value="340"/>
</dbReference>
<dbReference type="STRING" id="246194.CHY_0267"/>
<dbReference type="KEGG" id="chy:CHY_0267"/>
<dbReference type="eggNOG" id="COG0322">
    <property type="taxonomic scope" value="Bacteria"/>
</dbReference>
<dbReference type="HOGENOM" id="CLU_014841_3_2_9"/>
<dbReference type="InParanoid" id="Q3AFE5"/>
<dbReference type="Proteomes" id="UP000002706">
    <property type="component" value="Chromosome"/>
</dbReference>
<dbReference type="GO" id="GO:0005737">
    <property type="term" value="C:cytoplasm"/>
    <property type="evidence" value="ECO:0007669"/>
    <property type="project" value="UniProtKB-SubCell"/>
</dbReference>
<dbReference type="GO" id="GO:0009380">
    <property type="term" value="C:excinuclease repair complex"/>
    <property type="evidence" value="ECO:0007669"/>
    <property type="project" value="InterPro"/>
</dbReference>
<dbReference type="GO" id="GO:0003677">
    <property type="term" value="F:DNA binding"/>
    <property type="evidence" value="ECO:0007669"/>
    <property type="project" value="UniProtKB-UniRule"/>
</dbReference>
<dbReference type="GO" id="GO:0009381">
    <property type="term" value="F:excinuclease ABC activity"/>
    <property type="evidence" value="ECO:0007669"/>
    <property type="project" value="UniProtKB-UniRule"/>
</dbReference>
<dbReference type="GO" id="GO:0006289">
    <property type="term" value="P:nucleotide-excision repair"/>
    <property type="evidence" value="ECO:0007669"/>
    <property type="project" value="UniProtKB-UniRule"/>
</dbReference>
<dbReference type="GO" id="GO:0009432">
    <property type="term" value="P:SOS response"/>
    <property type="evidence" value="ECO:0007669"/>
    <property type="project" value="UniProtKB-UniRule"/>
</dbReference>
<dbReference type="CDD" id="cd10434">
    <property type="entry name" value="GIY-YIG_UvrC_Cho"/>
    <property type="match status" value="1"/>
</dbReference>
<dbReference type="FunFam" id="3.40.1440.10:FF:000001">
    <property type="entry name" value="UvrABC system protein C"/>
    <property type="match status" value="1"/>
</dbReference>
<dbReference type="Gene3D" id="1.10.150.20">
    <property type="entry name" value="5' to 3' exonuclease, C-terminal subdomain"/>
    <property type="match status" value="1"/>
</dbReference>
<dbReference type="Gene3D" id="3.40.1440.10">
    <property type="entry name" value="GIY-YIG endonuclease"/>
    <property type="match status" value="1"/>
</dbReference>
<dbReference type="Gene3D" id="4.10.860.10">
    <property type="entry name" value="UVR domain"/>
    <property type="match status" value="1"/>
</dbReference>
<dbReference type="Gene3D" id="3.30.420.340">
    <property type="entry name" value="UvrC, RNAse H endonuclease domain"/>
    <property type="match status" value="1"/>
</dbReference>
<dbReference type="HAMAP" id="MF_00203">
    <property type="entry name" value="UvrC"/>
    <property type="match status" value="1"/>
</dbReference>
<dbReference type="InterPro" id="IPR000305">
    <property type="entry name" value="GIY-YIG_endonuc"/>
</dbReference>
<dbReference type="InterPro" id="IPR035901">
    <property type="entry name" value="GIY-YIG_endonuc_sf"/>
</dbReference>
<dbReference type="InterPro" id="IPR047296">
    <property type="entry name" value="GIY-YIG_UvrC_Cho"/>
</dbReference>
<dbReference type="InterPro" id="IPR003583">
    <property type="entry name" value="Hlx-hairpin-Hlx_DNA-bd_motif"/>
</dbReference>
<dbReference type="InterPro" id="IPR010994">
    <property type="entry name" value="RuvA_2-like"/>
</dbReference>
<dbReference type="InterPro" id="IPR001943">
    <property type="entry name" value="UVR_dom"/>
</dbReference>
<dbReference type="InterPro" id="IPR036876">
    <property type="entry name" value="UVR_dom_sf"/>
</dbReference>
<dbReference type="InterPro" id="IPR050066">
    <property type="entry name" value="UvrABC_protein_C"/>
</dbReference>
<dbReference type="InterPro" id="IPR004791">
    <property type="entry name" value="UvrC"/>
</dbReference>
<dbReference type="InterPro" id="IPR001162">
    <property type="entry name" value="UvrC_RNase_H_dom"/>
</dbReference>
<dbReference type="InterPro" id="IPR038476">
    <property type="entry name" value="UvrC_RNase_H_dom_sf"/>
</dbReference>
<dbReference type="NCBIfam" id="NF001824">
    <property type="entry name" value="PRK00558.1-5"/>
    <property type="match status" value="1"/>
</dbReference>
<dbReference type="NCBIfam" id="TIGR00194">
    <property type="entry name" value="uvrC"/>
    <property type="match status" value="1"/>
</dbReference>
<dbReference type="PANTHER" id="PTHR30562:SF1">
    <property type="entry name" value="UVRABC SYSTEM PROTEIN C"/>
    <property type="match status" value="1"/>
</dbReference>
<dbReference type="PANTHER" id="PTHR30562">
    <property type="entry name" value="UVRC/OXIDOREDUCTASE"/>
    <property type="match status" value="1"/>
</dbReference>
<dbReference type="Pfam" id="PF01541">
    <property type="entry name" value="GIY-YIG"/>
    <property type="match status" value="1"/>
</dbReference>
<dbReference type="Pfam" id="PF14520">
    <property type="entry name" value="HHH_5"/>
    <property type="match status" value="1"/>
</dbReference>
<dbReference type="Pfam" id="PF02151">
    <property type="entry name" value="UVR"/>
    <property type="match status" value="1"/>
</dbReference>
<dbReference type="Pfam" id="PF22920">
    <property type="entry name" value="UvrC_RNaseH"/>
    <property type="match status" value="1"/>
</dbReference>
<dbReference type="Pfam" id="PF08459">
    <property type="entry name" value="UvrC_RNaseH_dom"/>
    <property type="match status" value="1"/>
</dbReference>
<dbReference type="SMART" id="SM00465">
    <property type="entry name" value="GIYc"/>
    <property type="match status" value="1"/>
</dbReference>
<dbReference type="SMART" id="SM00278">
    <property type="entry name" value="HhH1"/>
    <property type="match status" value="2"/>
</dbReference>
<dbReference type="SUPFAM" id="SSF46600">
    <property type="entry name" value="C-terminal UvrC-binding domain of UvrB"/>
    <property type="match status" value="1"/>
</dbReference>
<dbReference type="SUPFAM" id="SSF82771">
    <property type="entry name" value="GIY-YIG endonuclease"/>
    <property type="match status" value="1"/>
</dbReference>
<dbReference type="SUPFAM" id="SSF47781">
    <property type="entry name" value="RuvA domain 2-like"/>
    <property type="match status" value="1"/>
</dbReference>
<dbReference type="PROSITE" id="PS50164">
    <property type="entry name" value="GIY_YIG"/>
    <property type="match status" value="1"/>
</dbReference>
<dbReference type="PROSITE" id="PS50151">
    <property type="entry name" value="UVR"/>
    <property type="match status" value="1"/>
</dbReference>
<dbReference type="PROSITE" id="PS50165">
    <property type="entry name" value="UVRC"/>
    <property type="match status" value="1"/>
</dbReference>
<organism>
    <name type="scientific">Carboxydothermus hydrogenoformans (strain ATCC BAA-161 / DSM 6008 / Z-2901)</name>
    <dbReference type="NCBI Taxonomy" id="246194"/>
    <lineage>
        <taxon>Bacteria</taxon>
        <taxon>Bacillati</taxon>
        <taxon>Bacillota</taxon>
        <taxon>Clostridia</taxon>
        <taxon>Thermoanaerobacterales</taxon>
        <taxon>Thermoanaerobacteraceae</taxon>
        <taxon>Carboxydothermus</taxon>
    </lineage>
</organism>
<accession>Q3AFE5</accession>
<comment type="function">
    <text evidence="1">The UvrABC repair system catalyzes the recognition and processing of DNA lesions. UvrC both incises the 5' and 3' sides of the lesion. The N-terminal half is responsible for the 3' incision and the C-terminal half is responsible for the 5' incision.</text>
</comment>
<comment type="subunit">
    <text evidence="1">Interacts with UvrB in an incision complex.</text>
</comment>
<comment type="subcellular location">
    <subcellularLocation>
        <location evidence="1">Cytoplasm</location>
    </subcellularLocation>
</comment>
<comment type="similarity">
    <text evidence="1">Belongs to the UvrC family.</text>
</comment>